<sequence>MAVSARAGIVITGTEVLTGRVQDRNGPWIADRLLELGVELAHITICGDRPADIEAQLRFMAEQGVDLIVTSGGLGPTADDMTVEVVARYCGRELVLDDELENRIANILKKLMGRNPAIEPANFDSIRAANRKQAMIPAGSQVIDPVGTAPGLVVPGRPAVMVLPGPPRELQPIWSKAIQTAPVQDAIAGRTTYRQETIRIFGLPESSLADTLRDAEAAIPGFDLVEITTCLRRGEIEMVTRFEPNAAQVYTQLARLLRDRHGHQVYSEDGASVDELVAKLLTGRRIATAESCTAGLLAARLTDRPGSSKYVAGAVVAYSNEAKAQLLGVDPALIEAHGAVSEPVAQAMAAGALQGFGADTATAITGIAGPSGGTPEKPVGTVCFTVLLDDGRTTTRTVRLPGNRSDIRERSTTVAMHLLRRTLSGIPGSP</sequence>
<accession>C1API1</accession>
<evidence type="ECO:0000255" key="1">
    <source>
        <dbReference type="HAMAP-Rule" id="MF_00226"/>
    </source>
</evidence>
<comment type="similarity">
    <text evidence="1">Belongs to the CinA family.</text>
</comment>
<feature type="chain" id="PRO_1000124987" description="CinA-like protein">
    <location>
        <begin position="1"/>
        <end position="430"/>
    </location>
</feature>
<organism>
    <name type="scientific">Mycobacterium bovis (strain BCG / Tokyo 172 / ATCC 35737 / TMC 1019)</name>
    <dbReference type="NCBI Taxonomy" id="561275"/>
    <lineage>
        <taxon>Bacteria</taxon>
        <taxon>Bacillati</taxon>
        <taxon>Actinomycetota</taxon>
        <taxon>Actinomycetes</taxon>
        <taxon>Mycobacteriales</taxon>
        <taxon>Mycobacteriaceae</taxon>
        <taxon>Mycobacterium</taxon>
        <taxon>Mycobacterium tuberculosis complex</taxon>
    </lineage>
</organism>
<proteinExistence type="inferred from homology"/>
<reference key="1">
    <citation type="journal article" date="2009" name="Vaccine">
        <title>Whole genome sequence analysis of Mycobacterium bovis bacillus Calmette-Guerin (BCG) Tokyo 172: a comparative study of BCG vaccine substrains.</title>
        <authorList>
            <person name="Seki M."/>
            <person name="Honda I."/>
            <person name="Fujita I."/>
            <person name="Yano I."/>
            <person name="Yamamoto S."/>
            <person name="Koyama A."/>
        </authorList>
    </citation>
    <scope>NUCLEOTIDE SEQUENCE [LARGE SCALE GENOMIC DNA]</scope>
    <source>
        <strain>BCG / Tokyo 172 / ATCC 35737 / TMC 1019</strain>
    </source>
</reference>
<name>CINAL_MYCBT</name>
<dbReference type="EMBL" id="AP010918">
    <property type="protein sequence ID" value="BAH26210.1"/>
    <property type="molecule type" value="Genomic_DNA"/>
</dbReference>
<dbReference type="RefSeq" id="WP_003900426.1">
    <property type="nucleotide sequence ID" value="NZ_CP014566.1"/>
</dbReference>
<dbReference type="SMR" id="C1API1"/>
<dbReference type="KEGG" id="mbt:JTY_1924"/>
<dbReference type="HOGENOM" id="CLU_030805_9_2_11"/>
<dbReference type="CDD" id="cd00885">
    <property type="entry name" value="cinA"/>
    <property type="match status" value="1"/>
</dbReference>
<dbReference type="FunFam" id="3.40.980.10:FF:000018">
    <property type="entry name" value="CinA-like protein"/>
    <property type="match status" value="1"/>
</dbReference>
<dbReference type="Gene3D" id="3.90.950.20">
    <property type="entry name" value="CinA-like"/>
    <property type="match status" value="1"/>
</dbReference>
<dbReference type="Gene3D" id="3.40.980.10">
    <property type="entry name" value="MoaB/Mog-like domain"/>
    <property type="match status" value="1"/>
</dbReference>
<dbReference type="HAMAP" id="MF_00226_B">
    <property type="entry name" value="CinA_B"/>
    <property type="match status" value="1"/>
</dbReference>
<dbReference type="InterPro" id="IPR050101">
    <property type="entry name" value="CinA"/>
</dbReference>
<dbReference type="InterPro" id="IPR036653">
    <property type="entry name" value="CinA-like_C"/>
</dbReference>
<dbReference type="InterPro" id="IPR008136">
    <property type="entry name" value="CinA_C"/>
</dbReference>
<dbReference type="InterPro" id="IPR008135">
    <property type="entry name" value="Competence-induced_CinA"/>
</dbReference>
<dbReference type="InterPro" id="IPR036425">
    <property type="entry name" value="MoaB/Mog-like_dom_sf"/>
</dbReference>
<dbReference type="InterPro" id="IPR001453">
    <property type="entry name" value="MoaB/Mog_dom"/>
</dbReference>
<dbReference type="NCBIfam" id="TIGR00200">
    <property type="entry name" value="cinA_nterm"/>
    <property type="match status" value="1"/>
</dbReference>
<dbReference type="NCBIfam" id="TIGR00199">
    <property type="entry name" value="PncC_domain"/>
    <property type="match status" value="1"/>
</dbReference>
<dbReference type="NCBIfam" id="NF001813">
    <property type="entry name" value="PRK00549.1"/>
    <property type="match status" value="1"/>
</dbReference>
<dbReference type="PANTHER" id="PTHR13939">
    <property type="entry name" value="NICOTINAMIDE-NUCLEOTIDE AMIDOHYDROLASE PNCC"/>
    <property type="match status" value="1"/>
</dbReference>
<dbReference type="PANTHER" id="PTHR13939:SF0">
    <property type="entry name" value="NMN AMIDOHYDROLASE-LIKE PROTEIN YFAY"/>
    <property type="match status" value="1"/>
</dbReference>
<dbReference type="Pfam" id="PF02464">
    <property type="entry name" value="CinA"/>
    <property type="match status" value="1"/>
</dbReference>
<dbReference type="Pfam" id="PF00994">
    <property type="entry name" value="MoCF_biosynth"/>
    <property type="match status" value="1"/>
</dbReference>
<dbReference type="PIRSF" id="PIRSF006728">
    <property type="entry name" value="CinA"/>
    <property type="match status" value="1"/>
</dbReference>
<dbReference type="SMART" id="SM00852">
    <property type="entry name" value="MoCF_biosynth"/>
    <property type="match status" value="1"/>
</dbReference>
<dbReference type="SUPFAM" id="SSF142433">
    <property type="entry name" value="CinA-like"/>
    <property type="match status" value="1"/>
</dbReference>
<dbReference type="SUPFAM" id="SSF53218">
    <property type="entry name" value="Molybdenum cofactor biosynthesis proteins"/>
    <property type="match status" value="1"/>
</dbReference>
<protein>
    <recommendedName>
        <fullName evidence="1">CinA-like protein</fullName>
    </recommendedName>
</protein>
<gene>
    <name type="ordered locus">JTY_1924</name>
</gene>